<accession>A5IYY2</accession>
<evidence type="ECO:0000255" key="1">
    <source>
        <dbReference type="HAMAP-Rule" id="MF_00531"/>
    </source>
</evidence>
<evidence type="ECO:0000305" key="2"/>
<feature type="chain" id="PRO_1000128007" description="Small ribosomal subunit protein uS19">
    <location>
        <begin position="1"/>
        <end position="92"/>
    </location>
</feature>
<keyword id="KW-1185">Reference proteome</keyword>
<keyword id="KW-0687">Ribonucleoprotein</keyword>
<keyword id="KW-0689">Ribosomal protein</keyword>
<keyword id="KW-0694">RNA-binding</keyword>
<keyword id="KW-0699">rRNA-binding</keyword>
<dbReference type="EMBL" id="CU179680">
    <property type="protein sequence ID" value="CAL59241.1"/>
    <property type="molecule type" value="Genomic_DNA"/>
</dbReference>
<dbReference type="RefSeq" id="WP_004023956.1">
    <property type="nucleotide sequence ID" value="NC_009497.1"/>
</dbReference>
<dbReference type="SMR" id="A5IYY2"/>
<dbReference type="STRING" id="347257.MAG5420"/>
<dbReference type="GeneID" id="66645521"/>
<dbReference type="GeneID" id="93358286"/>
<dbReference type="KEGG" id="maa:MAG5420"/>
<dbReference type="HOGENOM" id="CLU_144911_0_1_14"/>
<dbReference type="Proteomes" id="UP000007065">
    <property type="component" value="Chromosome"/>
</dbReference>
<dbReference type="GO" id="GO:0005737">
    <property type="term" value="C:cytoplasm"/>
    <property type="evidence" value="ECO:0007669"/>
    <property type="project" value="UniProtKB-ARBA"/>
</dbReference>
<dbReference type="GO" id="GO:0015935">
    <property type="term" value="C:small ribosomal subunit"/>
    <property type="evidence" value="ECO:0007669"/>
    <property type="project" value="InterPro"/>
</dbReference>
<dbReference type="GO" id="GO:0019843">
    <property type="term" value="F:rRNA binding"/>
    <property type="evidence" value="ECO:0007669"/>
    <property type="project" value="UniProtKB-UniRule"/>
</dbReference>
<dbReference type="GO" id="GO:0003735">
    <property type="term" value="F:structural constituent of ribosome"/>
    <property type="evidence" value="ECO:0007669"/>
    <property type="project" value="InterPro"/>
</dbReference>
<dbReference type="GO" id="GO:0000028">
    <property type="term" value="P:ribosomal small subunit assembly"/>
    <property type="evidence" value="ECO:0007669"/>
    <property type="project" value="TreeGrafter"/>
</dbReference>
<dbReference type="GO" id="GO:0006412">
    <property type="term" value="P:translation"/>
    <property type="evidence" value="ECO:0007669"/>
    <property type="project" value="UniProtKB-UniRule"/>
</dbReference>
<dbReference type="FunFam" id="3.30.860.10:FF:000001">
    <property type="entry name" value="30S ribosomal protein S19"/>
    <property type="match status" value="1"/>
</dbReference>
<dbReference type="Gene3D" id="3.30.860.10">
    <property type="entry name" value="30s Ribosomal Protein S19, Chain A"/>
    <property type="match status" value="1"/>
</dbReference>
<dbReference type="HAMAP" id="MF_00531">
    <property type="entry name" value="Ribosomal_uS19"/>
    <property type="match status" value="1"/>
</dbReference>
<dbReference type="InterPro" id="IPR002222">
    <property type="entry name" value="Ribosomal_uS19"/>
</dbReference>
<dbReference type="InterPro" id="IPR005732">
    <property type="entry name" value="Ribosomal_uS19_bac-type"/>
</dbReference>
<dbReference type="InterPro" id="IPR020934">
    <property type="entry name" value="Ribosomal_uS19_CS"/>
</dbReference>
<dbReference type="InterPro" id="IPR023575">
    <property type="entry name" value="Ribosomal_uS19_SF"/>
</dbReference>
<dbReference type="NCBIfam" id="TIGR01050">
    <property type="entry name" value="rpsS_bact"/>
    <property type="match status" value="1"/>
</dbReference>
<dbReference type="PANTHER" id="PTHR11880">
    <property type="entry name" value="RIBOSOMAL PROTEIN S19P FAMILY MEMBER"/>
    <property type="match status" value="1"/>
</dbReference>
<dbReference type="PANTHER" id="PTHR11880:SF8">
    <property type="entry name" value="SMALL RIBOSOMAL SUBUNIT PROTEIN US19M"/>
    <property type="match status" value="1"/>
</dbReference>
<dbReference type="Pfam" id="PF00203">
    <property type="entry name" value="Ribosomal_S19"/>
    <property type="match status" value="1"/>
</dbReference>
<dbReference type="PIRSF" id="PIRSF002144">
    <property type="entry name" value="Ribosomal_S19"/>
    <property type="match status" value="1"/>
</dbReference>
<dbReference type="PRINTS" id="PR00975">
    <property type="entry name" value="RIBOSOMALS19"/>
</dbReference>
<dbReference type="SUPFAM" id="SSF54570">
    <property type="entry name" value="Ribosomal protein S19"/>
    <property type="match status" value="1"/>
</dbReference>
<dbReference type="PROSITE" id="PS00323">
    <property type="entry name" value="RIBOSOMAL_S19"/>
    <property type="match status" value="1"/>
</dbReference>
<proteinExistence type="inferred from homology"/>
<sequence length="92" mass="10401">MARSLKKGPFADEHLLKKVDAILEGKMPKKPIKTWSRRSTIFPSFIGLTFQVHNGHQHIDVYVTDDMVGHKLGEFVPTRTYSGHGAEKGKKK</sequence>
<name>RS19_MYCAP</name>
<comment type="function">
    <text evidence="1">Protein S19 forms a complex with S13 that binds strongly to the 16S ribosomal RNA.</text>
</comment>
<comment type="similarity">
    <text evidence="1">Belongs to the universal ribosomal protein uS19 family.</text>
</comment>
<protein>
    <recommendedName>
        <fullName evidence="1">Small ribosomal subunit protein uS19</fullName>
    </recommendedName>
    <alternativeName>
        <fullName evidence="2">30S ribosomal protein S19</fullName>
    </alternativeName>
</protein>
<organism>
    <name type="scientific">Mycoplasmopsis agalactiae (strain NCTC 10123 / CIP 59.7 / PG2)</name>
    <name type="common">Mycoplasma agalactiae</name>
    <dbReference type="NCBI Taxonomy" id="347257"/>
    <lineage>
        <taxon>Bacteria</taxon>
        <taxon>Bacillati</taxon>
        <taxon>Mycoplasmatota</taxon>
        <taxon>Mycoplasmoidales</taxon>
        <taxon>Metamycoplasmataceae</taxon>
        <taxon>Mycoplasmopsis</taxon>
    </lineage>
</organism>
<gene>
    <name evidence="1" type="primary">rpsS</name>
    <name type="ordered locus">MAG5420</name>
</gene>
<reference key="1">
    <citation type="journal article" date="2007" name="PLoS Genet.">
        <title>Being pathogenic, plastic, and sexual while living with a nearly minimal bacterial genome.</title>
        <authorList>
            <person name="Sirand-Pugnet P."/>
            <person name="Lartigue C."/>
            <person name="Marenda M."/>
            <person name="Jacob D."/>
            <person name="Barre A."/>
            <person name="Barbe V."/>
            <person name="Schenowitz C."/>
            <person name="Mangenot S."/>
            <person name="Couloux A."/>
            <person name="Segurens B."/>
            <person name="de Daruvar A."/>
            <person name="Blanchard A."/>
            <person name="Citti C."/>
        </authorList>
    </citation>
    <scope>NUCLEOTIDE SEQUENCE [LARGE SCALE GENOMIC DNA]</scope>
    <source>
        <strain>NCTC 10123 / CIP 59.7 / PG2</strain>
    </source>
</reference>